<keyword id="KW-0002">3D-structure</keyword>
<keyword id="KW-0025">Alternative splicing</keyword>
<keyword id="KW-0067">ATP-binding</keyword>
<keyword id="KW-0131">Cell cycle</keyword>
<keyword id="KW-0132">Cell division</keyword>
<keyword id="KW-0175">Coiled coil</keyword>
<keyword id="KW-0217">Developmental protein</keyword>
<keyword id="KW-0225">Disease variant</keyword>
<keyword id="KW-0347">Helicase</keyword>
<keyword id="KW-0378">Hydrolase</keyword>
<keyword id="KW-0498">Mitosis</keyword>
<keyword id="KW-0547">Nucleotide-binding</keyword>
<keyword id="KW-0539">Nucleus</keyword>
<keyword id="KW-0597">Phosphoprotein</keyword>
<keyword id="KW-1267">Proteomics identification</keyword>
<keyword id="KW-1185">Reference proteome</keyword>
<keyword id="KW-0804">Transcription</keyword>
<keyword id="KW-0805">Transcription regulation</keyword>
<dbReference type="EC" id="3.6.4.-"/>
<dbReference type="EMBL" id="AF155827">
    <property type="protein sequence ID" value="AAF82262.1"/>
    <property type="molecule type" value="mRNA"/>
</dbReference>
<dbReference type="EMBL" id="AB102717">
    <property type="protein sequence ID" value="BAD10845.1"/>
    <property type="molecule type" value="mRNA"/>
</dbReference>
<dbReference type="EMBL" id="AB102718">
    <property type="protein sequence ID" value="BAD10846.1"/>
    <property type="molecule type" value="mRNA"/>
</dbReference>
<dbReference type="EMBL" id="AB102719">
    <property type="protein sequence ID" value="BAD10847.1"/>
    <property type="molecule type" value="mRNA"/>
</dbReference>
<dbReference type="EMBL" id="AB102720">
    <property type="protein sequence ID" value="BAD10848.1"/>
    <property type="molecule type" value="mRNA"/>
</dbReference>
<dbReference type="EMBL" id="AB102721">
    <property type="protein sequence ID" value="BAD10849.1"/>
    <property type="molecule type" value="mRNA"/>
</dbReference>
<dbReference type="EMBL" id="AB102722">
    <property type="protein sequence ID" value="BAD10850.1"/>
    <property type="molecule type" value="mRNA"/>
</dbReference>
<dbReference type="EMBL" id="AK314485">
    <property type="protein sequence ID" value="BAG37088.1"/>
    <property type="molecule type" value="mRNA"/>
</dbReference>
<dbReference type="EMBL" id="AB113249">
    <property type="protein sequence ID" value="BAD24805.1"/>
    <property type="molecule type" value="mRNA"/>
</dbReference>
<dbReference type="EMBL" id="BX538033">
    <property type="protein sequence ID" value="CAD97978.1"/>
    <property type="molecule type" value="mRNA"/>
</dbReference>
<dbReference type="EMBL" id="AL138759">
    <property type="status" value="NOT_ANNOTATED_CDS"/>
    <property type="molecule type" value="Genomic_DNA"/>
</dbReference>
<dbReference type="EMBL" id="CH471066">
    <property type="protein sequence ID" value="EAW50035.1"/>
    <property type="molecule type" value="Genomic_DNA"/>
</dbReference>
<dbReference type="EMBL" id="BC015477">
    <property type="protein sequence ID" value="AAH15477.1"/>
    <property type="molecule type" value="mRNA"/>
</dbReference>
<dbReference type="EMBL" id="BC029381">
    <property type="protein sequence ID" value="AAH29381.1"/>
    <property type="status" value="ALT_INIT"/>
    <property type="molecule type" value="mRNA"/>
</dbReference>
<dbReference type="EMBL" id="BC030963">
    <property type="protein sequence ID" value="AAH30963.1"/>
    <property type="status" value="ALT_INIT"/>
    <property type="molecule type" value="mRNA"/>
</dbReference>
<dbReference type="EMBL" id="BC031004">
    <property type="protein sequence ID" value="AAH31004.1"/>
    <property type="status" value="ALT_INIT"/>
    <property type="molecule type" value="mRNA"/>
</dbReference>
<dbReference type="EMBL" id="AY007108">
    <property type="protein sequence ID" value="AAG01987.1"/>
    <property type="status" value="ALT_INIT"/>
    <property type="molecule type" value="mRNA"/>
</dbReference>
<dbReference type="EMBL" id="AB074174">
    <property type="protein sequence ID" value="BAE45737.1"/>
    <property type="molecule type" value="mRNA"/>
</dbReference>
<dbReference type="CCDS" id="CCDS73163.1">
    <molecule id="Q9NRZ9-5"/>
</dbReference>
<dbReference type="CCDS" id="CCDS7434.1">
    <molecule id="Q9NRZ9-1"/>
</dbReference>
<dbReference type="CCDS" id="CCDS91306.1">
    <molecule id="Q9NRZ9-3"/>
</dbReference>
<dbReference type="CCDS" id="CCDS91307.1">
    <molecule id="Q9NRZ9-6"/>
</dbReference>
<dbReference type="CCDS" id="CCDS91308.1">
    <molecule id="Q9NRZ9-2"/>
</dbReference>
<dbReference type="RefSeq" id="NP_001275996.1">
    <property type="nucleotide sequence ID" value="NM_001289067.1"/>
</dbReference>
<dbReference type="RefSeq" id="NP_001275997.1">
    <molecule id="Q9NRZ9-2"/>
    <property type="nucleotide sequence ID" value="NM_001289068.2"/>
</dbReference>
<dbReference type="RefSeq" id="NP_001275998.1">
    <molecule id="Q9NRZ9-3"/>
    <property type="nucleotide sequence ID" value="NM_001289069.2"/>
</dbReference>
<dbReference type="RefSeq" id="NP_001275999.1">
    <molecule id="Q9NRZ9-5"/>
    <property type="nucleotide sequence ID" value="NM_001289070.2"/>
</dbReference>
<dbReference type="RefSeq" id="NP_001276000.1">
    <property type="nucleotide sequence ID" value="NM_001289071.1"/>
</dbReference>
<dbReference type="RefSeq" id="NP_001276001.1">
    <molecule id="Q9NRZ9-6"/>
    <property type="nucleotide sequence ID" value="NM_001289072.2"/>
</dbReference>
<dbReference type="RefSeq" id="NP_001276002.1">
    <property type="nucleotide sequence ID" value="NM_001289073.1"/>
</dbReference>
<dbReference type="RefSeq" id="NP_001276003.1">
    <property type="nucleotide sequence ID" value="NM_001289074.1"/>
</dbReference>
<dbReference type="RefSeq" id="NP_001276004.1">
    <property type="nucleotide sequence ID" value="NM_001289075.1"/>
</dbReference>
<dbReference type="RefSeq" id="NP_060533.2">
    <molecule id="Q9NRZ9-1"/>
    <property type="nucleotide sequence ID" value="NM_018063.4"/>
</dbReference>
<dbReference type="PDB" id="8SKZ">
    <property type="method" value="EM"/>
    <property type="resolution" value="3.50 A"/>
    <property type="chains" value="A=500-553"/>
</dbReference>
<dbReference type="PDBsum" id="8SKZ"/>
<dbReference type="SMR" id="Q9NRZ9"/>
<dbReference type="BioGRID" id="109320">
    <property type="interactions" value="190"/>
</dbReference>
<dbReference type="FunCoup" id="Q9NRZ9">
    <property type="interactions" value="1342"/>
</dbReference>
<dbReference type="IntAct" id="Q9NRZ9">
    <property type="interactions" value="86"/>
</dbReference>
<dbReference type="MINT" id="Q9NRZ9"/>
<dbReference type="STRING" id="9606.ENSP00000377601"/>
<dbReference type="GlyGen" id="Q9NRZ9">
    <property type="glycosylation" value="4 sites, 5 N-linked glycans (3 sites), 1 O-linked glycan (1 site)"/>
</dbReference>
<dbReference type="iPTMnet" id="Q9NRZ9"/>
<dbReference type="MetOSite" id="Q9NRZ9"/>
<dbReference type="PhosphoSitePlus" id="Q9NRZ9"/>
<dbReference type="BioMuta" id="HELLS"/>
<dbReference type="DMDM" id="74761670"/>
<dbReference type="jPOST" id="Q9NRZ9"/>
<dbReference type="MassIVE" id="Q9NRZ9"/>
<dbReference type="PaxDb" id="9606-ENSP00000377601"/>
<dbReference type="PeptideAtlas" id="Q9NRZ9"/>
<dbReference type="ProteomicsDB" id="82450">
    <molecule id="Q9NRZ9-1"/>
</dbReference>
<dbReference type="ProteomicsDB" id="82451">
    <molecule id="Q9NRZ9-2"/>
</dbReference>
<dbReference type="ProteomicsDB" id="82452">
    <molecule id="Q9NRZ9-3"/>
</dbReference>
<dbReference type="ProteomicsDB" id="82453">
    <molecule id="Q9NRZ9-4"/>
</dbReference>
<dbReference type="ProteomicsDB" id="82454">
    <molecule id="Q9NRZ9-5"/>
</dbReference>
<dbReference type="ProteomicsDB" id="82455">
    <molecule id="Q9NRZ9-6"/>
</dbReference>
<dbReference type="ProteomicsDB" id="82456">
    <molecule id="Q9NRZ9-7"/>
</dbReference>
<dbReference type="ProteomicsDB" id="82457">
    <molecule id="Q9NRZ9-8"/>
</dbReference>
<dbReference type="ProteomicsDB" id="82458">
    <molecule id="Q9NRZ9-9"/>
</dbReference>
<dbReference type="Pumba" id="Q9NRZ9"/>
<dbReference type="Antibodypedia" id="3852">
    <property type="antibodies" value="272 antibodies from 33 providers"/>
</dbReference>
<dbReference type="DNASU" id="3070"/>
<dbReference type="Ensembl" id="ENST00000348459.10">
    <molecule id="Q9NRZ9-1"/>
    <property type="protein sequence ID" value="ENSP00000239027.7"/>
    <property type="gene ID" value="ENSG00000119969.16"/>
</dbReference>
<dbReference type="Ensembl" id="ENST00000371332.9">
    <molecule id="Q9NRZ9-9"/>
    <property type="protein sequence ID" value="ENSP00000360383.6"/>
    <property type="gene ID" value="ENSG00000119969.16"/>
</dbReference>
<dbReference type="Ensembl" id="ENST00000394045.6">
    <molecule id="Q9NRZ9-5"/>
    <property type="protein sequence ID" value="ENSP00000377609.1"/>
    <property type="gene ID" value="ENSG00000119969.16"/>
</dbReference>
<dbReference type="Ensembl" id="ENST00000419900.6">
    <molecule id="Q9NRZ9-2"/>
    <property type="protein sequence ID" value="ENSP00000409945.2"/>
    <property type="gene ID" value="ENSG00000119969.16"/>
</dbReference>
<dbReference type="Ensembl" id="ENST00000698675.1">
    <molecule id="Q9NRZ9-3"/>
    <property type="protein sequence ID" value="ENSP00000513940.1"/>
    <property type="gene ID" value="ENSG00000119969.16"/>
</dbReference>
<dbReference type="Ensembl" id="ENST00000698799.1">
    <molecule id="Q9NRZ9-6"/>
    <property type="protein sequence ID" value="ENSP00000513942.1"/>
    <property type="gene ID" value="ENSG00000119969.16"/>
</dbReference>
<dbReference type="Ensembl" id="ENST00000698800.1">
    <molecule id="Q9NRZ9-7"/>
    <property type="protein sequence ID" value="ENSP00000513943.1"/>
    <property type="gene ID" value="ENSG00000119969.16"/>
</dbReference>
<dbReference type="Ensembl" id="ENST00000698830.1">
    <molecule id="Q9NRZ9-8"/>
    <property type="protein sequence ID" value="ENSP00000513967.1"/>
    <property type="gene ID" value="ENSG00000119969.16"/>
</dbReference>
<dbReference type="GeneID" id="3070"/>
<dbReference type="KEGG" id="hsa:3070"/>
<dbReference type="MANE-Select" id="ENST00000348459.10">
    <property type="protein sequence ID" value="ENSP00000239027.7"/>
    <property type="RefSeq nucleotide sequence ID" value="NM_018063.5"/>
    <property type="RefSeq protein sequence ID" value="NP_060533.2"/>
</dbReference>
<dbReference type="UCSC" id="uc001kjt.5">
    <molecule id="Q9NRZ9-1"/>
    <property type="organism name" value="human"/>
</dbReference>
<dbReference type="AGR" id="HGNC:4861"/>
<dbReference type="CTD" id="3070"/>
<dbReference type="DisGeNET" id="3070"/>
<dbReference type="GeneCards" id="HELLS"/>
<dbReference type="HGNC" id="HGNC:4861">
    <property type="gene designation" value="HELLS"/>
</dbReference>
<dbReference type="HPA" id="ENSG00000119969">
    <property type="expression patterns" value="Tissue enhanced (lymphoid)"/>
</dbReference>
<dbReference type="MalaCards" id="HELLS"/>
<dbReference type="MIM" id="603946">
    <property type="type" value="gene"/>
</dbReference>
<dbReference type="MIM" id="616911">
    <property type="type" value="phenotype"/>
</dbReference>
<dbReference type="neXtProt" id="NX_Q9NRZ9"/>
<dbReference type="OpenTargets" id="ENSG00000119969"/>
<dbReference type="Orphanet" id="2268">
    <property type="disease" value="ICF syndrome"/>
</dbReference>
<dbReference type="PharmGKB" id="PA35054"/>
<dbReference type="VEuPathDB" id="HostDB:ENSG00000119969"/>
<dbReference type="eggNOG" id="KOG0385">
    <property type="taxonomic scope" value="Eukaryota"/>
</dbReference>
<dbReference type="GeneTree" id="ENSGT00740000115593"/>
<dbReference type="InParanoid" id="Q9NRZ9"/>
<dbReference type="OrthoDB" id="5857104at2759"/>
<dbReference type="PAN-GO" id="Q9NRZ9">
    <property type="GO annotations" value="8 GO annotations based on evolutionary models"/>
</dbReference>
<dbReference type="PhylomeDB" id="Q9NRZ9"/>
<dbReference type="TreeFam" id="TF329077"/>
<dbReference type="PathwayCommons" id="Q9NRZ9"/>
<dbReference type="Reactome" id="R-HSA-9839394">
    <property type="pathway name" value="TGFBR3 expression"/>
</dbReference>
<dbReference type="SignaLink" id="Q9NRZ9"/>
<dbReference type="BioGRID-ORCS" id="3070">
    <property type="hits" value="20 hits in 1177 CRISPR screens"/>
</dbReference>
<dbReference type="ChiTaRS" id="HELLS">
    <property type="organism name" value="human"/>
</dbReference>
<dbReference type="GeneWiki" id="HELLS"/>
<dbReference type="GenomeRNAi" id="3070"/>
<dbReference type="Pharos" id="Q9NRZ9">
    <property type="development level" value="Tbio"/>
</dbReference>
<dbReference type="PRO" id="PR:Q9NRZ9"/>
<dbReference type="Proteomes" id="UP000005640">
    <property type="component" value="Chromosome 10"/>
</dbReference>
<dbReference type="RNAct" id="Q9NRZ9">
    <property type="molecule type" value="protein"/>
</dbReference>
<dbReference type="Bgee" id="ENSG00000119969">
    <property type="expression patterns" value="Expressed in primordial germ cell in gonad and 146 other cell types or tissues"/>
</dbReference>
<dbReference type="ExpressionAtlas" id="Q9NRZ9">
    <property type="expression patterns" value="baseline and differential"/>
</dbReference>
<dbReference type="GO" id="GO:0000775">
    <property type="term" value="C:chromosome, centromeric region"/>
    <property type="evidence" value="ECO:0000250"/>
    <property type="project" value="UniProtKB"/>
</dbReference>
<dbReference type="GO" id="GO:0005634">
    <property type="term" value="C:nucleus"/>
    <property type="evidence" value="ECO:0000318"/>
    <property type="project" value="GO_Central"/>
</dbReference>
<dbReference type="GO" id="GO:0005721">
    <property type="term" value="C:pericentric heterochromatin"/>
    <property type="evidence" value="ECO:0000250"/>
    <property type="project" value="UniProtKB"/>
</dbReference>
<dbReference type="GO" id="GO:0005524">
    <property type="term" value="F:ATP binding"/>
    <property type="evidence" value="ECO:0007669"/>
    <property type="project" value="UniProtKB-KW"/>
</dbReference>
<dbReference type="GO" id="GO:0003682">
    <property type="term" value="F:chromatin binding"/>
    <property type="evidence" value="ECO:0000318"/>
    <property type="project" value="GO_Central"/>
</dbReference>
<dbReference type="GO" id="GO:0004386">
    <property type="term" value="F:helicase activity"/>
    <property type="evidence" value="ECO:0007669"/>
    <property type="project" value="UniProtKB-KW"/>
</dbReference>
<dbReference type="GO" id="GO:0016787">
    <property type="term" value="F:hydrolase activity"/>
    <property type="evidence" value="ECO:0007669"/>
    <property type="project" value="UniProtKB-KW"/>
</dbReference>
<dbReference type="GO" id="GO:0006915">
    <property type="term" value="P:apoptotic process"/>
    <property type="evidence" value="ECO:0007669"/>
    <property type="project" value="Ensembl"/>
</dbReference>
<dbReference type="GO" id="GO:0051301">
    <property type="term" value="P:cell division"/>
    <property type="evidence" value="ECO:0007669"/>
    <property type="project" value="UniProtKB-KW"/>
</dbReference>
<dbReference type="GO" id="GO:1990830">
    <property type="term" value="P:cellular response to leukemia inhibitory factor"/>
    <property type="evidence" value="ECO:0007669"/>
    <property type="project" value="Ensembl"/>
</dbReference>
<dbReference type="GO" id="GO:0141119">
    <property type="term" value="P:chromosomal DNA methylation maintenance following DNA replication"/>
    <property type="evidence" value="ECO:0007669"/>
    <property type="project" value="Ensembl"/>
</dbReference>
<dbReference type="GO" id="GO:0006346">
    <property type="term" value="P:DNA methylation-dependent constitutive heterochromatin formation"/>
    <property type="evidence" value="ECO:0000250"/>
    <property type="project" value="UniProtKB"/>
</dbReference>
<dbReference type="GO" id="GO:0001822">
    <property type="term" value="P:kidney development"/>
    <property type="evidence" value="ECO:0000250"/>
    <property type="project" value="UniProtKB"/>
</dbReference>
<dbReference type="GO" id="GO:0046651">
    <property type="term" value="P:lymphocyte proliferation"/>
    <property type="evidence" value="ECO:0000250"/>
    <property type="project" value="UniProtKB"/>
</dbReference>
<dbReference type="GO" id="GO:0044027">
    <property type="term" value="P:negative regulation of gene expression via chromosomal CpG island methylation"/>
    <property type="evidence" value="ECO:0000250"/>
    <property type="project" value="UniProtKB"/>
</dbReference>
<dbReference type="GO" id="GO:2001243">
    <property type="term" value="P:negative regulation of intrinsic apoptotic signaling pathway"/>
    <property type="evidence" value="ECO:0007669"/>
    <property type="project" value="Ensembl"/>
</dbReference>
<dbReference type="GO" id="GO:0031508">
    <property type="term" value="P:pericentric heterochromatin formation"/>
    <property type="evidence" value="ECO:0000250"/>
    <property type="project" value="UniProtKB"/>
</dbReference>
<dbReference type="GO" id="GO:0001655">
    <property type="term" value="P:urogenital system development"/>
    <property type="evidence" value="ECO:0007669"/>
    <property type="project" value="Ensembl"/>
</dbReference>
<dbReference type="CDD" id="cd18009">
    <property type="entry name" value="DEXHc_HELLS_SMARCA6"/>
    <property type="match status" value="1"/>
</dbReference>
<dbReference type="CDD" id="cd18793">
    <property type="entry name" value="SF2_C_SNF"/>
    <property type="match status" value="1"/>
</dbReference>
<dbReference type="FunFam" id="3.40.50.10810:FF:000015">
    <property type="entry name" value="lymphoid-specific helicase isoform X1"/>
    <property type="match status" value="1"/>
</dbReference>
<dbReference type="FunFam" id="3.40.50.300:FF:000577">
    <property type="entry name" value="lymphoid-specific helicase isoform X1"/>
    <property type="match status" value="1"/>
</dbReference>
<dbReference type="Gene3D" id="3.40.50.300">
    <property type="entry name" value="P-loop containing nucleotide triphosphate hydrolases"/>
    <property type="match status" value="1"/>
</dbReference>
<dbReference type="Gene3D" id="3.40.50.10810">
    <property type="entry name" value="Tandem AAA-ATPase domain"/>
    <property type="match status" value="1"/>
</dbReference>
<dbReference type="InterPro" id="IPR014001">
    <property type="entry name" value="Helicase_ATP-bd"/>
</dbReference>
<dbReference type="InterPro" id="IPR001650">
    <property type="entry name" value="Helicase_C-like"/>
</dbReference>
<dbReference type="InterPro" id="IPR044753">
    <property type="entry name" value="HELLS_N"/>
</dbReference>
<dbReference type="InterPro" id="IPR027417">
    <property type="entry name" value="P-loop_NTPase"/>
</dbReference>
<dbReference type="InterPro" id="IPR038718">
    <property type="entry name" value="SNF2-like_sf"/>
</dbReference>
<dbReference type="InterPro" id="IPR049730">
    <property type="entry name" value="SNF2/RAD54-like_C"/>
</dbReference>
<dbReference type="InterPro" id="IPR000330">
    <property type="entry name" value="SNF2_N"/>
</dbReference>
<dbReference type="PANTHER" id="PTHR47161">
    <property type="entry name" value="LYMPHOID-SPECIFIC HELICASE"/>
    <property type="match status" value="1"/>
</dbReference>
<dbReference type="PANTHER" id="PTHR47161:SF1">
    <property type="entry name" value="LYMPHOID-SPECIFIC HELICASE"/>
    <property type="match status" value="1"/>
</dbReference>
<dbReference type="Pfam" id="PF00271">
    <property type="entry name" value="Helicase_C"/>
    <property type="match status" value="1"/>
</dbReference>
<dbReference type="Pfam" id="PF00176">
    <property type="entry name" value="SNF2-rel_dom"/>
    <property type="match status" value="1"/>
</dbReference>
<dbReference type="SMART" id="SM00487">
    <property type="entry name" value="DEXDc"/>
    <property type="match status" value="1"/>
</dbReference>
<dbReference type="SMART" id="SM00490">
    <property type="entry name" value="HELICc"/>
    <property type="match status" value="1"/>
</dbReference>
<dbReference type="SUPFAM" id="SSF52540">
    <property type="entry name" value="P-loop containing nucleoside triphosphate hydrolases"/>
    <property type="match status" value="2"/>
</dbReference>
<dbReference type="PROSITE" id="PS51192">
    <property type="entry name" value="HELICASE_ATP_BIND_1"/>
    <property type="match status" value="1"/>
</dbReference>
<dbReference type="PROSITE" id="PS51194">
    <property type="entry name" value="HELICASE_CTER"/>
    <property type="match status" value="1"/>
</dbReference>
<accession>Q9NRZ9</accession>
<accession>B2RB41</accession>
<accession>Q3LID1</accession>
<accession>Q6I7N7</accession>
<accession>Q76H76</accession>
<accession>Q76H77</accession>
<accession>Q76H78</accession>
<accession>Q76H79</accession>
<accession>Q76H80</accession>
<accession>Q76H81</accession>
<accession>Q7Z397</accession>
<accession>Q7Z5X2</accession>
<accession>Q8N6P4</accession>
<accession>Q9H4P5</accession>
<sequence length="838" mass="97074">MPAERPAGSGGSEAPAMVEQLDTAVITPAMLEEEEQLEAAGLERERKMLEKARMSWDRESTEIRYRRLQHLLEKSNIYSKFLLTKMEQQQLEEQKKKEKLERKKESLKVKKGKNSIDASEEKPVMRKKRGREDESYNISEVMSKEEILSVAKKNKKENEDENSSSTNLCVEDLQKNKDSNSIIKDRLSETVRQNTKFFFDPVRKCNGQPVPFQQPKHFTGGVMRWYQVEGMEWLRMLWENGINGILADEMGLGKTVQCIATIALMIQRGVPGPFLVCGPLSTLPNWMAEFKRFTPDIPTMLYHGTQEERQKLVRNIYKRKGTLQIHPVVITSFEIAMRDRNALQHCYWKYLIVDEGHRIKNMKCRLIRELKRFNADNKLLLTGTPLQNNLSELWSLLNFLLPDVFDDLKSFESWFDITSLSETAEDIIAKEREQNVLHMLHQILTPFLLRRLKSDVALEVPPKREVVVYAPLSKKQEIFYTAIVNRTIANMFGSSEKETIELSPTGRPKRRTRKSINYSKIDDFPNELEKLISQIQPEVDRERAVVEVNIPVESEVNLKLQNIMMLLRKCCNHPYLIEYPIDPVTQEFKIDEELVTNSGKFLILDRMLPELKKRGHKVLLFSQMTSMLDILMDYCHLRDFNFSRLDGSMSYSEREKNMHSFNTDPEVFIFLVSTRAGGLGINLTAADTVIIYDSDWNPQSDLQAQDRCHRIGQTKPVVVYRLVTANTIDQKIVERAAAKRKLEKLIIHKNHFKGGQSGLNLSKNFLDPKELMELLKSRDYEREIKGSREKVISDKDLELLLDRSDLIDQMNASGPIKEKMGIFKILENSEDSSPECLF</sequence>
<evidence type="ECO:0000250" key="1"/>
<evidence type="ECO:0000250" key="2">
    <source>
        <dbReference type="UniProtKB" id="Q60848"/>
    </source>
</evidence>
<evidence type="ECO:0000255" key="3"/>
<evidence type="ECO:0000255" key="4">
    <source>
        <dbReference type="PROSITE-ProRule" id="PRU00541"/>
    </source>
</evidence>
<evidence type="ECO:0000255" key="5">
    <source>
        <dbReference type="PROSITE-ProRule" id="PRU00542"/>
    </source>
</evidence>
<evidence type="ECO:0000256" key="6">
    <source>
        <dbReference type="SAM" id="MobiDB-lite"/>
    </source>
</evidence>
<evidence type="ECO:0000269" key="7">
    <source>
    </source>
</evidence>
<evidence type="ECO:0000269" key="8">
    <source>
    </source>
</evidence>
<evidence type="ECO:0000269" key="9">
    <source>
    </source>
</evidence>
<evidence type="ECO:0000269" key="10">
    <source>
    </source>
</evidence>
<evidence type="ECO:0000269" key="11">
    <source>
    </source>
</evidence>
<evidence type="ECO:0000303" key="12">
    <source>
    </source>
</evidence>
<evidence type="ECO:0000303" key="13">
    <source>
    </source>
</evidence>
<evidence type="ECO:0000303" key="14">
    <source>
    </source>
</evidence>
<evidence type="ECO:0000305" key="15"/>
<evidence type="ECO:0000312" key="16">
    <source>
        <dbReference type="EMBL" id="AAF82262.1"/>
    </source>
</evidence>
<evidence type="ECO:0000312" key="17">
    <source>
        <dbReference type="EMBL" id="AAH15477.1"/>
    </source>
</evidence>
<evidence type="ECO:0000312" key="18">
    <source>
        <dbReference type="EMBL" id="AAH29381.1"/>
    </source>
</evidence>
<evidence type="ECO:0000312" key="19">
    <source>
        <dbReference type="EMBL" id="AAH30963.1"/>
    </source>
</evidence>
<evidence type="ECO:0000312" key="20">
    <source>
        <dbReference type="EMBL" id="AL138759"/>
    </source>
</evidence>
<evidence type="ECO:0000312" key="21">
    <source>
        <dbReference type="EMBL" id="BAD10846.1"/>
    </source>
</evidence>
<evidence type="ECO:0000312" key="22">
    <source>
        <dbReference type="EMBL" id="BAE45737.1"/>
    </source>
</evidence>
<evidence type="ECO:0000312" key="23">
    <source>
        <dbReference type="EMBL" id="CAD97978.1"/>
    </source>
</evidence>
<evidence type="ECO:0000312" key="24">
    <source>
        <dbReference type="HGNC" id="HGNC:4861"/>
    </source>
</evidence>
<evidence type="ECO:0007744" key="25">
    <source>
    </source>
</evidence>
<organism>
    <name type="scientific">Homo sapiens</name>
    <name type="common">Human</name>
    <dbReference type="NCBI Taxonomy" id="9606"/>
    <lineage>
        <taxon>Eukaryota</taxon>
        <taxon>Metazoa</taxon>
        <taxon>Chordata</taxon>
        <taxon>Craniata</taxon>
        <taxon>Vertebrata</taxon>
        <taxon>Euteleostomi</taxon>
        <taxon>Mammalia</taxon>
        <taxon>Eutheria</taxon>
        <taxon>Euarchontoglires</taxon>
        <taxon>Primates</taxon>
        <taxon>Haplorrhini</taxon>
        <taxon>Catarrhini</taxon>
        <taxon>Hominidae</taxon>
        <taxon>Homo</taxon>
    </lineage>
</organism>
<comment type="function">
    <text evidence="2">Plays an essential role in normal development and survival. Involved in regulation of the expansion or survival of lymphoid cells. Required for de novo or maintenance DNA methylation. May control silencing of the imprinted CDKN1C gene through DNA methylation. May play a role in formation and organization of heterochromatin, implying a functional role in the regulation of transcription and mitosis (By similarity).</text>
</comment>
<comment type="interaction">
    <interactant intactId="EBI-1056215">
        <id>Q9NRZ9</id>
    </interactant>
    <interactant intactId="EBI-765551">
        <id>O00716</id>
        <label>E2F3</label>
    </interactant>
    <organismsDiffer>false</organismsDiffer>
    <experiments>2</experiments>
</comment>
<comment type="interaction">
    <interactant intactId="EBI-12003732">
        <id>Q9NRZ9-6</id>
    </interactant>
    <interactant intactId="EBI-718729">
        <id>P55212</id>
        <label>CASP6</label>
    </interactant>
    <organismsDiffer>false</organismsDiffer>
    <experiments>3</experiments>
</comment>
<comment type="interaction">
    <interactant intactId="EBI-12003732">
        <id>Q9NRZ9-6</id>
    </interactant>
    <interactant intactId="EBI-6624398">
        <id>P06307</id>
        <label>CCK</label>
    </interactant>
    <organismsDiffer>false</organismsDiffer>
    <experiments>3</experiments>
</comment>
<comment type="interaction">
    <interactant intactId="EBI-12003732">
        <id>Q9NRZ9-6</id>
    </interactant>
    <interactant intactId="EBI-19128683">
        <id>Q9H1H1</id>
        <label>GTSF1L</label>
    </interactant>
    <organismsDiffer>false</organismsDiffer>
    <experiments>3</experiments>
</comment>
<comment type="interaction">
    <interactant intactId="EBI-12003732">
        <id>Q9NRZ9-6</id>
    </interactant>
    <interactant intactId="EBI-21591415">
        <id>P13473-2</id>
        <label>LAMP2</label>
    </interactant>
    <organismsDiffer>false</organismsDiffer>
    <experiments>3</experiments>
</comment>
<comment type="interaction">
    <interactant intactId="EBI-12003732">
        <id>Q9NRZ9-6</id>
    </interactant>
    <interactant intactId="EBI-16439278">
        <id>Q6FHY5</id>
        <label>MEOX2</label>
    </interactant>
    <organismsDiffer>false</organismsDiffer>
    <experiments>3</experiments>
</comment>
<comment type="interaction">
    <interactant intactId="EBI-12003732">
        <id>Q9NRZ9-6</id>
    </interactant>
    <interactant intactId="EBI-5280197">
        <id>O75400-2</id>
        <label>PRPF40A</label>
    </interactant>
    <organismsDiffer>false</organismsDiffer>
    <experiments>3</experiments>
</comment>
<comment type="interaction">
    <interactant intactId="EBI-12003732">
        <id>Q9NRZ9-6</id>
    </interactant>
    <interactant intactId="EBI-286642">
        <id>P62826</id>
        <label>RAN</label>
    </interactant>
    <organismsDiffer>false</organismsDiffer>
    <experiments>3</experiments>
</comment>
<comment type="interaction">
    <interactant intactId="EBI-12003732">
        <id>Q9NRZ9-6</id>
    </interactant>
    <interactant intactId="EBI-2822051">
        <id>Q14140</id>
        <label>SERTAD2</label>
    </interactant>
    <organismsDiffer>false</organismsDiffer>
    <experiments>3</experiments>
</comment>
<comment type="subcellular location">
    <subcellularLocation>
        <location evidence="1">Nucleus</location>
    </subcellularLocation>
    <text evidence="1">Closely associated with pericentric heterochromatin.</text>
</comment>
<comment type="alternative products">
    <event type="alternative splicing"/>
    <isoform>
        <id>Q9NRZ9-1</id>
        <name evidence="7">1</name>
        <sequence type="displayed"/>
    </isoform>
    <isoform>
        <id>Q9NRZ9-2</id>
        <name>2</name>
        <sequence type="described" ref="VSP_052224"/>
    </isoform>
    <isoform>
        <id>Q9NRZ9-3</id>
        <name evidence="9">3</name>
        <sequence type="described" ref="VSP_052228"/>
    </isoform>
    <isoform>
        <id>Q9NRZ9-4</id>
        <name evidence="9">4</name>
        <sequence type="described" ref="VSP_052234"/>
    </isoform>
    <isoform>
        <id>Q9NRZ9-5</id>
        <name evidence="9">5</name>
        <sequence type="described" ref="VSP_052231"/>
    </isoform>
    <isoform>
        <id>Q9NRZ9-6</id>
        <name evidence="9">6</name>
        <sequence type="described" ref="VSP_052227"/>
    </isoform>
    <isoform>
        <id>Q9NRZ9-7</id>
        <name evidence="9">7</name>
        <sequence type="described" ref="VSP_052232 VSP_052233"/>
    </isoform>
    <isoform>
        <id>Q9NRZ9-8</id>
        <name evidence="9">8</name>
        <sequence type="described" ref="VSP_052229 VSP_052230"/>
    </isoform>
    <isoform>
        <id>Q9NRZ9-9</id>
        <name evidence="9">9</name>
        <sequence type="described" ref="VSP_052225 VSP_052226"/>
    </isoform>
</comment>
<comment type="tissue specificity">
    <text evidence="7">Highly expressed in proliferative tissues such as adult thymus and testis, and expressed at lower levels in uterus, small intestine, colon, and peripheral blood mononuclear cells. Also expressed in neoplastic cell lines including those derived from myeloid and lymphoid leukemias.</text>
</comment>
<comment type="induction">
    <text evidence="7">By concanavalin-A in peripheral blood leukocytes.</text>
</comment>
<comment type="disease" evidence="11">
    <disease id="DI-04705">
        <name>Immunodeficiency-centromeric instability-facial anomalies syndrome 4</name>
        <acronym>ICF4</acronym>
        <description>A rare disorder characterized by a variable immunodeficiency resulting in recurrent infections, facial anomalies, and branching of chromosomes 1, 9, and 16. Other variable symptoms include growth retardation, failure to thrive, and psychomotor retardation. Laboratory studies show limited hypomethylation of DNA in a small fraction of the genome in some, but not all, patients.</description>
        <dbReference type="MIM" id="616911"/>
    </disease>
    <text>The disease may be caused by variants affecting the gene represented in this entry.</text>
</comment>
<comment type="similarity">
    <text evidence="15">Belongs to the SNF2/RAD54 helicase family.</text>
</comment>
<comment type="sequence caution" evidence="15">
    <conflict type="erroneous initiation">
        <sequence resource="EMBL-CDS" id="AAG01987"/>
    </conflict>
</comment>
<comment type="sequence caution" evidence="15">
    <conflict type="erroneous initiation">
        <sequence resource="EMBL-CDS" id="AAH29381"/>
    </conflict>
</comment>
<comment type="sequence caution" evidence="15">
    <conflict type="erroneous initiation">
        <sequence resource="EMBL-CDS" id="AAH30963"/>
    </conflict>
</comment>
<comment type="sequence caution" evidence="15">
    <conflict type="erroneous initiation">
        <sequence resource="EMBL-CDS" id="AAH31004"/>
    </conflict>
</comment>
<feature type="chain" id="PRO_0000260051" description="Lymphoid-specific helicase">
    <location>
        <begin position="1"/>
        <end position="838"/>
    </location>
</feature>
<feature type="domain" description="Helicase ATP-binding" evidence="4">
    <location>
        <begin position="235"/>
        <end position="403"/>
    </location>
</feature>
<feature type="domain" description="Helicase C-terminal" evidence="5">
    <location>
        <begin position="603"/>
        <end position="767"/>
    </location>
</feature>
<feature type="region of interest" description="Disordered" evidence="6">
    <location>
        <begin position="94"/>
        <end position="135"/>
    </location>
</feature>
<feature type="coiled-coil region" evidence="3">
    <location>
        <begin position="30"/>
        <end position="115"/>
    </location>
</feature>
<feature type="short sequence motif" description="DEAH box" evidence="3">
    <location>
        <begin position="354"/>
        <end position="357"/>
    </location>
</feature>
<feature type="compositionally biased region" description="Basic and acidic residues" evidence="6">
    <location>
        <begin position="94"/>
        <end position="108"/>
    </location>
</feature>
<feature type="compositionally biased region" description="Basic and acidic residues" evidence="6">
    <location>
        <begin position="119"/>
        <end position="134"/>
    </location>
</feature>
<feature type="binding site" evidence="4">
    <location>
        <begin position="248"/>
        <end position="255"/>
    </location>
    <ligand>
        <name>ATP</name>
        <dbReference type="ChEBI" id="CHEBI:30616"/>
    </ligand>
</feature>
<feature type="modified residue" description="Phosphoserine" evidence="25">
    <location>
        <position position="115"/>
    </location>
</feature>
<feature type="modified residue" description="Phosphoserine" evidence="25">
    <location>
        <position position="503"/>
    </location>
</feature>
<feature type="modified residue" description="Phosphoserine" evidence="2">
    <location>
        <position position="515"/>
    </location>
</feature>
<feature type="splice variant" id="VSP_052224" description="In isoform 2." evidence="14">
    <location>
        <begin position="1"/>
        <end position="16"/>
    </location>
</feature>
<feature type="splice variant" id="VSP_052225" description="In isoform 9." evidence="13">
    <original>VMRKKR</original>
    <variation>GNFVCG</variation>
    <location>
        <begin position="124"/>
        <end position="129"/>
    </location>
</feature>
<feature type="splice variant" id="VSP_052226" description="In isoform 9." evidence="13">
    <location>
        <begin position="130"/>
        <end position="838"/>
    </location>
</feature>
<feature type="splice variant" id="VSP_052227" description="In isoform 6." evidence="13">
    <location>
        <begin position="313"/>
        <end position="442"/>
    </location>
</feature>
<feature type="splice variant" id="VSP_052228" description="In isoform 3." evidence="13">
    <location>
        <begin position="313"/>
        <end position="344"/>
    </location>
</feature>
<feature type="splice variant" id="VSP_052229" description="In isoform 8." evidence="13">
    <original>VRN</original>
    <variation>IYL</variation>
    <location>
        <begin position="313"/>
        <end position="315"/>
    </location>
</feature>
<feature type="splice variant" id="VSP_052230" description="In isoform 8." evidence="13">
    <location>
        <begin position="316"/>
        <end position="838"/>
    </location>
</feature>
<feature type="splice variant" id="VSP_052231" description="In isoform 5." evidence="13">
    <location>
        <begin position="345"/>
        <end position="442"/>
    </location>
</feature>
<feature type="splice variant" id="VSP_052232" description="In isoform 7." evidence="13">
    <original>H</original>
    <variation>L</variation>
    <location>
        <position position="345"/>
    </location>
</feature>
<feature type="splice variant" id="VSP_052233" description="In isoform 7." evidence="13">
    <location>
        <begin position="346"/>
        <end position="838"/>
    </location>
</feature>
<feature type="splice variant" id="VSP_052234" description="In isoform 4." evidence="13">
    <location>
        <begin position="783"/>
        <end position="838"/>
    </location>
</feature>
<feature type="sequence variant" id="VAR_064720" description="Found in a renal cell carcinoma sample; somatic mutation." evidence="10">
    <original>H</original>
    <variation>R</variation>
    <location>
        <position position="616"/>
    </location>
</feature>
<feature type="sequence variant" id="VAR_076582" description="In ICF4; uncertain significance; dbSNP:rs879253733." evidence="11">
    <original>Q</original>
    <variation>R</variation>
    <location>
        <position position="699"/>
    </location>
</feature>
<feature type="sequence variant" id="VAR_076583" description="In ICF4; uncertain significance." evidence="11">
    <location>
        <position position="801"/>
    </location>
</feature>
<feature type="sequence conflict" description="In Ref. 4; CAD97978." evidence="15" ref="4">
    <original>Y</original>
    <variation>F</variation>
    <location>
        <position position="136"/>
    </location>
</feature>
<feature type="sequence conflict" description="In Ref. 4; CAD97978." evidence="15" ref="4">
    <original>D</original>
    <variation>N</variation>
    <location>
        <position position="646"/>
    </location>
</feature>
<feature type="sequence conflict" description="In Ref. 7; AAH29381." evidence="15" ref="7">
    <original>W</original>
    <variation>C</variation>
    <location>
        <position position="696"/>
    </location>
</feature>
<feature type="sequence conflict" description="In Ref. 9; BAE45737." evidence="15" ref="9">
    <original>L</original>
    <variation>P</variation>
    <location>
        <position position="702"/>
    </location>
</feature>
<name>HELLS_HUMAN</name>
<reference evidence="15 16" key="1">
    <citation type="journal article" date="2000" name="Cancer Res.">
        <title>Proliferation-associated SNF2-like gene (PASG): a SNF2 family member altered in leukemia.</title>
        <authorList>
            <person name="Lee D.W."/>
            <person name="Zhang K."/>
            <person name="Ning Z.-Q."/>
            <person name="Raabe E.H."/>
            <person name="Tintner S."/>
            <person name="Wieland R."/>
            <person name="Wilkins B.J."/>
            <person name="Kim J.M."/>
            <person name="Blough R.I."/>
            <person name="Arceci R.J."/>
        </authorList>
    </citation>
    <scope>NUCLEOTIDE SEQUENCE [MRNA] (ISOFORM 1)</scope>
    <scope>TISSUE SPECIFICITY</scope>
    <scope>INDUCTION</scope>
</reference>
<reference evidence="15 21" key="2">
    <citation type="journal article" date="2004" name="Int. J. Cancer">
        <title>Tumor-specific exon creation of the HELLS/SMARCA6 gene in non-small cell lung cancer.</title>
        <authorList>
            <person name="Yano M."/>
            <person name="Ouchida M."/>
            <person name="Shigematsu H."/>
            <person name="Tanaka N."/>
            <person name="Ichimura K."/>
            <person name="Kobayashi K."/>
            <person name="Inaki Y."/>
            <person name="Toyooka S."/>
            <person name="Tsukuda K."/>
            <person name="Shimizu N."/>
            <person name="Shimizu K."/>
        </authorList>
    </citation>
    <scope>NUCLEOTIDE SEQUENCE [MRNA] (ISOFORMS 3; 4; 5; 6; 7; 8 AND 9)</scope>
</reference>
<reference key="3">
    <citation type="journal article" date="2004" name="Nat. Genet.">
        <title>Complete sequencing and characterization of 21,243 full-length human cDNAs.</title>
        <authorList>
            <person name="Ota T."/>
            <person name="Suzuki Y."/>
            <person name="Nishikawa T."/>
            <person name="Otsuki T."/>
            <person name="Sugiyama T."/>
            <person name="Irie R."/>
            <person name="Wakamatsu A."/>
            <person name="Hayashi K."/>
            <person name="Sato H."/>
            <person name="Nagai K."/>
            <person name="Kimura K."/>
            <person name="Makita H."/>
            <person name="Sekine M."/>
            <person name="Obayashi M."/>
            <person name="Nishi T."/>
            <person name="Shibahara T."/>
            <person name="Tanaka T."/>
            <person name="Ishii S."/>
            <person name="Yamamoto J."/>
            <person name="Saito K."/>
            <person name="Kawai Y."/>
            <person name="Isono Y."/>
            <person name="Nakamura Y."/>
            <person name="Nagahari K."/>
            <person name="Murakami K."/>
            <person name="Yasuda T."/>
            <person name="Iwayanagi T."/>
            <person name="Wagatsuma M."/>
            <person name="Shiratori A."/>
            <person name="Sudo H."/>
            <person name="Hosoiri T."/>
            <person name="Kaku Y."/>
            <person name="Kodaira H."/>
            <person name="Kondo H."/>
            <person name="Sugawara M."/>
            <person name="Takahashi M."/>
            <person name="Kanda K."/>
            <person name="Yokoi T."/>
            <person name="Furuya T."/>
            <person name="Kikkawa E."/>
            <person name="Omura Y."/>
            <person name="Abe K."/>
            <person name="Kamihara K."/>
            <person name="Katsuta N."/>
            <person name="Sato K."/>
            <person name="Tanikawa M."/>
            <person name="Yamazaki M."/>
            <person name="Ninomiya K."/>
            <person name="Ishibashi T."/>
            <person name="Yamashita H."/>
            <person name="Murakawa K."/>
            <person name="Fujimori K."/>
            <person name="Tanai H."/>
            <person name="Kimata M."/>
            <person name="Watanabe M."/>
            <person name="Hiraoka S."/>
            <person name="Chiba Y."/>
            <person name="Ishida S."/>
            <person name="Ono Y."/>
            <person name="Takiguchi S."/>
            <person name="Watanabe S."/>
            <person name="Yosida M."/>
            <person name="Hotuta T."/>
            <person name="Kusano J."/>
            <person name="Kanehori K."/>
            <person name="Takahashi-Fujii A."/>
            <person name="Hara H."/>
            <person name="Tanase T.-O."/>
            <person name="Nomura Y."/>
            <person name="Togiya S."/>
            <person name="Komai F."/>
            <person name="Hara R."/>
            <person name="Takeuchi K."/>
            <person name="Arita M."/>
            <person name="Imose N."/>
            <person name="Musashino K."/>
            <person name="Yuuki H."/>
            <person name="Oshima A."/>
            <person name="Sasaki N."/>
            <person name="Aotsuka S."/>
            <person name="Yoshikawa Y."/>
            <person name="Matsunawa H."/>
            <person name="Ichihara T."/>
            <person name="Shiohata N."/>
            <person name="Sano S."/>
            <person name="Moriya S."/>
            <person name="Momiyama H."/>
            <person name="Satoh N."/>
            <person name="Takami S."/>
            <person name="Terashima Y."/>
            <person name="Suzuki O."/>
            <person name="Nakagawa S."/>
            <person name="Senoh A."/>
            <person name="Mizoguchi H."/>
            <person name="Goto Y."/>
            <person name="Shimizu F."/>
            <person name="Wakebe H."/>
            <person name="Hishigaki H."/>
            <person name="Watanabe T."/>
            <person name="Sugiyama A."/>
            <person name="Takemoto M."/>
            <person name="Kawakami B."/>
            <person name="Yamazaki M."/>
            <person name="Watanabe K."/>
            <person name="Kumagai A."/>
            <person name="Itakura S."/>
            <person name="Fukuzumi Y."/>
            <person name="Fujimori Y."/>
            <person name="Komiyama M."/>
            <person name="Tashiro H."/>
            <person name="Tanigami A."/>
            <person name="Fujiwara T."/>
            <person name="Ono T."/>
            <person name="Yamada K."/>
            <person name="Fujii Y."/>
            <person name="Ozaki K."/>
            <person name="Hirao M."/>
            <person name="Ohmori Y."/>
            <person name="Kawabata A."/>
            <person name="Hikiji T."/>
            <person name="Kobatake N."/>
            <person name="Inagaki H."/>
            <person name="Ikema Y."/>
            <person name="Okamoto S."/>
            <person name="Okitani R."/>
            <person name="Kawakami T."/>
            <person name="Noguchi S."/>
            <person name="Itoh T."/>
            <person name="Shigeta K."/>
            <person name="Senba T."/>
            <person name="Matsumura K."/>
            <person name="Nakajima Y."/>
            <person name="Mizuno T."/>
            <person name="Morinaga M."/>
            <person name="Sasaki M."/>
            <person name="Togashi T."/>
            <person name="Oyama M."/>
            <person name="Hata H."/>
            <person name="Watanabe M."/>
            <person name="Komatsu T."/>
            <person name="Mizushima-Sugano J."/>
            <person name="Satoh T."/>
            <person name="Shirai Y."/>
            <person name="Takahashi Y."/>
            <person name="Nakagawa K."/>
            <person name="Okumura K."/>
            <person name="Nagase T."/>
            <person name="Nomura N."/>
            <person name="Kikuchi H."/>
            <person name="Masuho Y."/>
            <person name="Yamashita R."/>
            <person name="Nakai K."/>
            <person name="Yada T."/>
            <person name="Nakamura Y."/>
            <person name="Ohara O."/>
            <person name="Isogai T."/>
            <person name="Sugano S."/>
        </authorList>
    </citation>
    <scope>NUCLEOTIDE SEQUENCE [LARGE SCALE MRNA] (ISOFORM 1)</scope>
    <source>
        <tissue>Testis</tissue>
    </source>
</reference>
<reference key="4">
    <citation type="journal article" date="2007" name="BMC Genomics">
        <title>The full-ORF clone resource of the German cDNA consortium.</title>
        <authorList>
            <person name="Bechtel S."/>
            <person name="Rosenfelder H."/>
            <person name="Duda A."/>
            <person name="Schmidt C.P."/>
            <person name="Ernst U."/>
            <person name="Wellenreuther R."/>
            <person name="Mehrle A."/>
            <person name="Schuster C."/>
            <person name="Bahr A."/>
            <person name="Bloecker H."/>
            <person name="Heubner D."/>
            <person name="Hoerlein A."/>
            <person name="Michel G."/>
            <person name="Wedler H."/>
            <person name="Koehrer K."/>
            <person name="Ottenwaelder B."/>
            <person name="Poustka A."/>
            <person name="Wiemann S."/>
            <person name="Schupp I."/>
        </authorList>
    </citation>
    <scope>NUCLEOTIDE SEQUENCE [LARGE SCALE MRNA] (ISOFORM 2)</scope>
    <source>
        <tissue>Endometrial tumor</tissue>
    </source>
</reference>
<reference evidence="20" key="5">
    <citation type="journal article" date="2004" name="Nature">
        <title>The DNA sequence and comparative analysis of human chromosome 10.</title>
        <authorList>
            <person name="Deloukas P."/>
            <person name="Earthrowl M.E."/>
            <person name="Grafham D.V."/>
            <person name="Rubenfield M."/>
            <person name="French L."/>
            <person name="Steward C.A."/>
            <person name="Sims S.K."/>
            <person name="Jones M.C."/>
            <person name="Searle S."/>
            <person name="Scott C."/>
            <person name="Howe K."/>
            <person name="Hunt S.E."/>
            <person name="Andrews T.D."/>
            <person name="Gilbert J.G.R."/>
            <person name="Swarbreck D."/>
            <person name="Ashurst J.L."/>
            <person name="Taylor A."/>
            <person name="Battles J."/>
            <person name="Bird C.P."/>
            <person name="Ainscough R."/>
            <person name="Almeida J.P."/>
            <person name="Ashwell R.I.S."/>
            <person name="Ambrose K.D."/>
            <person name="Babbage A.K."/>
            <person name="Bagguley C.L."/>
            <person name="Bailey J."/>
            <person name="Banerjee R."/>
            <person name="Bates K."/>
            <person name="Beasley H."/>
            <person name="Bray-Allen S."/>
            <person name="Brown A.J."/>
            <person name="Brown J.Y."/>
            <person name="Burford D.C."/>
            <person name="Burrill W."/>
            <person name="Burton J."/>
            <person name="Cahill P."/>
            <person name="Camire D."/>
            <person name="Carter N.P."/>
            <person name="Chapman J.C."/>
            <person name="Clark S.Y."/>
            <person name="Clarke G."/>
            <person name="Clee C.M."/>
            <person name="Clegg S."/>
            <person name="Corby N."/>
            <person name="Coulson A."/>
            <person name="Dhami P."/>
            <person name="Dutta I."/>
            <person name="Dunn M."/>
            <person name="Faulkner L."/>
            <person name="Frankish A."/>
            <person name="Frankland J.A."/>
            <person name="Garner P."/>
            <person name="Garnett J."/>
            <person name="Gribble S."/>
            <person name="Griffiths C."/>
            <person name="Grocock R."/>
            <person name="Gustafson E."/>
            <person name="Hammond S."/>
            <person name="Harley J.L."/>
            <person name="Hart E."/>
            <person name="Heath P.D."/>
            <person name="Ho T.P."/>
            <person name="Hopkins B."/>
            <person name="Horne J."/>
            <person name="Howden P.J."/>
            <person name="Huckle E."/>
            <person name="Hynds C."/>
            <person name="Johnson C."/>
            <person name="Johnson D."/>
            <person name="Kana A."/>
            <person name="Kay M."/>
            <person name="Kimberley A.M."/>
            <person name="Kershaw J.K."/>
            <person name="Kokkinaki M."/>
            <person name="Laird G.K."/>
            <person name="Lawlor S."/>
            <person name="Lee H.M."/>
            <person name="Leongamornlert D.A."/>
            <person name="Laird G."/>
            <person name="Lloyd C."/>
            <person name="Lloyd D.M."/>
            <person name="Loveland J."/>
            <person name="Lovell J."/>
            <person name="McLaren S."/>
            <person name="McLay K.E."/>
            <person name="McMurray A."/>
            <person name="Mashreghi-Mohammadi M."/>
            <person name="Matthews L."/>
            <person name="Milne S."/>
            <person name="Nickerson T."/>
            <person name="Nguyen M."/>
            <person name="Overton-Larty E."/>
            <person name="Palmer S.A."/>
            <person name="Pearce A.V."/>
            <person name="Peck A.I."/>
            <person name="Pelan S."/>
            <person name="Phillimore B."/>
            <person name="Porter K."/>
            <person name="Rice C.M."/>
            <person name="Rogosin A."/>
            <person name="Ross M.T."/>
            <person name="Sarafidou T."/>
            <person name="Sehra H.K."/>
            <person name="Shownkeen R."/>
            <person name="Skuce C.D."/>
            <person name="Smith M."/>
            <person name="Standring L."/>
            <person name="Sycamore N."/>
            <person name="Tester J."/>
            <person name="Thorpe A."/>
            <person name="Torcasso W."/>
            <person name="Tracey A."/>
            <person name="Tromans A."/>
            <person name="Tsolas J."/>
            <person name="Wall M."/>
            <person name="Walsh J."/>
            <person name="Wang H."/>
            <person name="Weinstock K."/>
            <person name="West A.P."/>
            <person name="Willey D.L."/>
            <person name="Whitehead S.L."/>
            <person name="Wilming L."/>
            <person name="Wray P.W."/>
            <person name="Young L."/>
            <person name="Chen Y."/>
            <person name="Lovering R.C."/>
            <person name="Moschonas N.K."/>
            <person name="Siebert R."/>
            <person name="Fechtel K."/>
            <person name="Bentley D."/>
            <person name="Durbin R.M."/>
            <person name="Hubbard T."/>
            <person name="Doucette-Stamm L."/>
            <person name="Beck S."/>
            <person name="Smith D.R."/>
            <person name="Rogers J."/>
        </authorList>
    </citation>
    <scope>NUCLEOTIDE SEQUENCE [LARGE SCALE GENOMIC DNA]</scope>
</reference>
<reference evidence="15 23" key="6">
    <citation type="submission" date="2005-09" db="EMBL/GenBank/DDBJ databases">
        <authorList>
            <person name="Mural R.J."/>
            <person name="Istrail S."/>
            <person name="Sutton G.G."/>
            <person name="Florea L."/>
            <person name="Halpern A.L."/>
            <person name="Mobarry C.M."/>
            <person name="Lippert R."/>
            <person name="Walenz B."/>
            <person name="Shatkay H."/>
            <person name="Dew I."/>
            <person name="Miller J.R."/>
            <person name="Flanigan M.J."/>
            <person name="Edwards N.J."/>
            <person name="Bolanos R."/>
            <person name="Fasulo D."/>
            <person name="Halldorsson B.V."/>
            <person name="Hannenhalli S."/>
            <person name="Turner R."/>
            <person name="Yooseph S."/>
            <person name="Lu F."/>
            <person name="Nusskern D.R."/>
            <person name="Shue B.C."/>
            <person name="Zheng X.H."/>
            <person name="Zhong F."/>
            <person name="Delcher A.L."/>
            <person name="Huson D.H."/>
            <person name="Kravitz S.A."/>
            <person name="Mouchard L."/>
            <person name="Reinert K."/>
            <person name="Remington K.A."/>
            <person name="Clark A.G."/>
            <person name="Waterman M.S."/>
            <person name="Eichler E.E."/>
            <person name="Adams M.D."/>
            <person name="Hunkapiller M.W."/>
            <person name="Myers E.W."/>
            <person name="Venter J.C."/>
        </authorList>
    </citation>
    <scope>NUCLEOTIDE SEQUENCE [LARGE SCALE GENOMIC DNA]</scope>
</reference>
<reference evidence="15 19" key="7">
    <citation type="journal article" date="2004" name="Genome Res.">
        <title>The status, quality, and expansion of the NIH full-length cDNA project: the Mammalian Gene Collection (MGC).</title>
        <authorList>
            <consortium name="The MGC Project Team"/>
        </authorList>
    </citation>
    <scope>NUCLEOTIDE SEQUENCE [LARGE SCALE MRNA] OF 415-838 (ISOFORMS 1/2/3)</scope>
    <source>
        <tissue evidence="19">Bone marrow</tissue>
        <tissue evidence="18">Prostate</tissue>
        <tissue evidence="17">Uterus</tissue>
    </source>
</reference>
<reference evidence="15 23" key="8">
    <citation type="submission" date="2000-07" db="EMBL/GenBank/DDBJ databases">
        <authorList>
            <person name="Zhou J."/>
            <person name="Yu W."/>
            <person name="Tang H."/>
            <person name="Mei G."/>
            <person name="Tsang Y.T.M."/>
            <person name="Bouck J."/>
            <person name="Gibbs R.A."/>
            <person name="Margolin J.F."/>
        </authorList>
    </citation>
    <scope>NUCLEOTIDE SEQUENCE [LARGE SCALE MRNA] OF 464-838 (ISOFORMS 1/2/3/5/6)</scope>
    <source>
        <tissue>Brain</tissue>
    </source>
</reference>
<reference evidence="15 22" key="9">
    <citation type="journal article" date="2003" name="Cancer Lett.">
        <title>Neuroblastoma oligo-capping cDNA project: toward the understanding of the genesis and biology of neuroblastoma.</title>
        <authorList>
            <person name="Ohira M."/>
            <person name="Morohashi A."/>
            <person name="Nakamura Y."/>
            <person name="Isogai E."/>
            <person name="Furuya K."/>
            <person name="Hamano S."/>
            <person name="Machida T."/>
            <person name="Aoyama M."/>
            <person name="Fukumura M."/>
            <person name="Miyazaki K."/>
            <person name="Suzuki Y."/>
            <person name="Sugano S."/>
            <person name="Hirato J."/>
            <person name="Nakagawara A."/>
        </authorList>
    </citation>
    <scope>NUCLEOTIDE SEQUENCE [LARGE SCALE MRNA] OF 467-838 (ISOFORMS 1/2/3/5/6)</scope>
    <source>
        <tissue evidence="8">Neuroblastoma</tissue>
    </source>
</reference>
<reference key="10">
    <citation type="journal article" date="2008" name="Mol. Cell">
        <title>Kinase-selective enrichment enables quantitative phosphoproteomics of the kinome across the cell cycle.</title>
        <authorList>
            <person name="Daub H."/>
            <person name="Olsen J.V."/>
            <person name="Bairlein M."/>
            <person name="Gnad F."/>
            <person name="Oppermann F.S."/>
            <person name="Korner R."/>
            <person name="Greff Z."/>
            <person name="Keri G."/>
            <person name="Stemmann O."/>
            <person name="Mann M."/>
        </authorList>
    </citation>
    <scope>IDENTIFICATION BY MASS SPECTROMETRY [LARGE SCALE ANALYSIS]</scope>
    <source>
        <tissue>Cervix carcinoma</tissue>
    </source>
</reference>
<reference key="11">
    <citation type="journal article" date="2009" name="Anal. Chem.">
        <title>Lys-N and trypsin cover complementary parts of the phosphoproteome in a refined SCX-based approach.</title>
        <authorList>
            <person name="Gauci S."/>
            <person name="Helbig A.O."/>
            <person name="Slijper M."/>
            <person name="Krijgsveld J."/>
            <person name="Heck A.J."/>
            <person name="Mohammed S."/>
        </authorList>
    </citation>
    <scope>IDENTIFICATION BY MASS SPECTROMETRY [LARGE SCALE ANALYSIS]</scope>
</reference>
<reference key="12">
    <citation type="journal article" date="2010" name="Sci. Signal.">
        <title>Quantitative phosphoproteomics reveals widespread full phosphorylation site occupancy during mitosis.</title>
        <authorList>
            <person name="Olsen J.V."/>
            <person name="Vermeulen M."/>
            <person name="Santamaria A."/>
            <person name="Kumar C."/>
            <person name="Miller M.L."/>
            <person name="Jensen L.J."/>
            <person name="Gnad F."/>
            <person name="Cox J."/>
            <person name="Jensen T.S."/>
            <person name="Nigg E.A."/>
            <person name="Brunak S."/>
            <person name="Mann M."/>
        </authorList>
    </citation>
    <scope>IDENTIFICATION BY MASS SPECTROMETRY [LARGE SCALE ANALYSIS]</scope>
    <source>
        <tissue>Cervix carcinoma</tissue>
    </source>
</reference>
<reference key="13">
    <citation type="journal article" date="2011" name="BMC Syst. Biol.">
        <title>Initial characterization of the human central proteome.</title>
        <authorList>
            <person name="Burkard T.R."/>
            <person name="Planyavsky M."/>
            <person name="Kaupe I."/>
            <person name="Breitwieser F.P."/>
            <person name="Buerckstuemmer T."/>
            <person name="Bennett K.L."/>
            <person name="Superti-Furga G."/>
            <person name="Colinge J."/>
        </authorList>
    </citation>
    <scope>IDENTIFICATION BY MASS SPECTROMETRY [LARGE SCALE ANALYSIS]</scope>
</reference>
<reference key="14">
    <citation type="journal article" date="2013" name="J. Proteome Res.">
        <title>Toward a comprehensive characterization of a human cancer cell phosphoproteome.</title>
        <authorList>
            <person name="Zhou H."/>
            <person name="Di Palma S."/>
            <person name="Preisinger C."/>
            <person name="Peng M."/>
            <person name="Polat A.N."/>
            <person name="Heck A.J."/>
            <person name="Mohammed S."/>
        </authorList>
    </citation>
    <scope>PHOSPHORYLATION [LARGE SCALE ANALYSIS] AT SER-115 AND SER-503</scope>
    <scope>IDENTIFICATION BY MASS SPECTROMETRY [LARGE SCALE ANALYSIS]</scope>
    <source>
        <tissue>Cervix carcinoma</tissue>
        <tissue>Erythroleukemia</tissue>
    </source>
</reference>
<reference key="15">
    <citation type="journal article" date="2015" name="Nat. Commun.">
        <title>Mutations in CDCA7 and HELLS cause immunodeficiency-centromeric instability-facial anomalies syndrome.</title>
        <authorList>
            <person name="Thijssen P.E."/>
            <person name="Ito Y."/>
            <person name="Grillo G."/>
            <person name="Wang J."/>
            <person name="Velasco G."/>
            <person name="Nitta H."/>
            <person name="Unoki M."/>
            <person name="Yoshihara M."/>
            <person name="Suyama M."/>
            <person name="Sun Y."/>
            <person name="Lemmers R.J."/>
            <person name="de Greef J.C."/>
            <person name="Gennery A."/>
            <person name="Picco P."/>
            <person name="Kloeckener-Gruissem B."/>
            <person name="Guengoer T."/>
            <person name="Reisli I."/>
            <person name="Picard C."/>
            <person name="Kebaili K."/>
            <person name="Roquelaure B."/>
            <person name="Iwai T."/>
            <person name="Kondo I."/>
            <person name="Kubota T."/>
            <person name="van Ostaijen-Ten Dam M.M."/>
            <person name="van Tol M.J."/>
            <person name="Weemaes C."/>
            <person name="Francastel C."/>
            <person name="van der Maarel S.M."/>
            <person name="Sasaki H."/>
        </authorList>
    </citation>
    <scope>INVOLVEMENT IN ICF4</scope>
    <scope>VARIANTS ICF4 ARG-699 AND LEU-801 DEL</scope>
</reference>
<reference key="16">
    <citation type="journal article" date="2011" name="Nature">
        <title>Exome sequencing identifies frequent mutation of the SWI/SNF complex gene PBRM1 in renal carcinoma.</title>
        <authorList>
            <person name="Varela I."/>
            <person name="Tarpey P."/>
            <person name="Raine K."/>
            <person name="Huang D."/>
            <person name="Ong C.K."/>
            <person name="Stephens P."/>
            <person name="Davies H."/>
            <person name="Jones D."/>
            <person name="Lin M.L."/>
            <person name="Teague J."/>
            <person name="Bignell G."/>
            <person name="Butler A."/>
            <person name="Cho J."/>
            <person name="Dalgliesh G.L."/>
            <person name="Galappaththige D."/>
            <person name="Greenman C."/>
            <person name="Hardy C."/>
            <person name="Jia M."/>
            <person name="Latimer C."/>
            <person name="Lau K.W."/>
            <person name="Marshall J."/>
            <person name="McLaren S."/>
            <person name="Menzies A."/>
            <person name="Mudie L."/>
            <person name="Stebbings L."/>
            <person name="Largaespada D.A."/>
            <person name="Wessels L.F.A."/>
            <person name="Richard S."/>
            <person name="Kahnoski R.J."/>
            <person name="Anema J."/>
            <person name="Tuveson D.A."/>
            <person name="Perez-Mancera P.A."/>
            <person name="Mustonen V."/>
            <person name="Fischer A."/>
            <person name="Adams D.J."/>
            <person name="Rust A."/>
            <person name="Chan-On W."/>
            <person name="Subimerb C."/>
            <person name="Dykema K."/>
            <person name="Furge K."/>
            <person name="Campbell P.J."/>
            <person name="Teh B.T."/>
            <person name="Stratton M.R."/>
            <person name="Futreal P.A."/>
        </authorList>
    </citation>
    <scope>VARIANT ARG-616</scope>
</reference>
<protein>
    <recommendedName>
        <fullName>Lymphoid-specific helicase</fullName>
        <ecNumber>3.6.4.-</ecNumber>
    </recommendedName>
    <alternativeName>
        <fullName>Proliferation-associated SNF2-like protein</fullName>
    </alternativeName>
    <alternativeName>
        <fullName>SWI/SNF2-related matrix-associated actin-dependent regulator of chromatin subfamily A member 6</fullName>
    </alternativeName>
</protein>
<gene>
    <name evidence="24" type="primary">HELLS</name>
    <name evidence="12" type="synonym">PASG</name>
    <name evidence="16" type="synonym">SMARCA6</name>
    <name type="ORF">Nbla10143</name>
</gene>
<proteinExistence type="evidence at protein level"/>